<reference key="1">
    <citation type="journal article" date="2003" name="Lancet">
        <title>Sequencing and analysis of the genome of the Whipple's disease bacterium Tropheryma whipplei.</title>
        <authorList>
            <person name="Bentley S.D."/>
            <person name="Maiwald M."/>
            <person name="Murphy L.D."/>
            <person name="Pallen M.J."/>
            <person name="Yeats C.A."/>
            <person name="Dover L.G."/>
            <person name="Norbertczak H.T."/>
            <person name="Besra G.S."/>
            <person name="Quail M.A."/>
            <person name="Harris D.E."/>
            <person name="von Herbay A."/>
            <person name="Goble A."/>
            <person name="Rutter S."/>
            <person name="Squares R."/>
            <person name="Squares S."/>
            <person name="Barrell B.G."/>
            <person name="Parkhill J."/>
            <person name="Relman D.A."/>
        </authorList>
    </citation>
    <scope>NUCLEOTIDE SEQUENCE [LARGE SCALE GENOMIC DNA]</scope>
    <source>
        <strain>TW08/27</strain>
    </source>
</reference>
<protein>
    <recommendedName>
        <fullName evidence="1">Protein translocase subunit SecA</fullName>
        <ecNumber evidence="1">7.4.2.8</ecNumber>
    </recommendedName>
</protein>
<sequence>MSVKLLERILRAGEGRTLKRLRNIAHTVNAIEDEYKGCTDGELRTFAFDLKVRHQNGESLDSILPEAFAMVREASSRTLGLRHFDVQIMGGAALHMGYIAEMFTGEGKTLVATLPAFLNSLSGNGVHIVTVNDYLAGYHSQQMGRVYKVLGLETGVILADQDPSTRAQQYRADITYGTNNEFGFDYLRDNMAWSCAERVQRGHNFVILDEVDSILIDEARTPLIISGSSSGEVSRWFVEFAGIARALTAGEDYDVDERKHTVGVLEPGIAKVEDLLGISNLYESVNTPLISFLNNSIKAKELFKRDRDYVVLDGEVMIVDEHTGRILSGRRYNEGLHQAIEAKEGVEIKAENQTLATVTLQNYFRLYKKISGMTGTAVTEASEFMSTYKLPVVSIPTNKPNIRKDHPDVVYKNEQIKFENLADHVRECYTRGQPVLIGTTSVEKSEYVSKLLSKRGVRHEVLNAKNHAKEARIVAEAGRLRAVTVATNMAGRGTDIILGGNPEVLTAVELRRKGLDPSKDPERYEQAWSSAFPKLHRRTREEAEKVIEAGGLMVIGTERHESRRIDNQLRGRSGRQGDPGESRFYLSLTDDLMRKFNPGAASALAARVPDDTAIESKLVSRAIRSAQAQVESLNAETRKNVLKYDDVLNRQRAAIYTDRSRILEGGDIADRVQAFLSDAIEEIINSHAVTAWDFDALWADLKTIYPVGISIEELTDEAGGMGRITPDFVMREILSDAKFAYEKRESEIGPESMRDLERKVVLSVIDRCWRDHLYEMEYLKEGIGLRAMAQRDPLVEYQKEGFDMFEAMMGRIREESIGYLFNIDAQVSSNSPSDARNRPIEHDDNAV</sequence>
<proteinExistence type="inferred from homology"/>
<keyword id="KW-0067">ATP-binding</keyword>
<keyword id="KW-1003">Cell membrane</keyword>
<keyword id="KW-0963">Cytoplasm</keyword>
<keyword id="KW-0472">Membrane</keyword>
<keyword id="KW-0547">Nucleotide-binding</keyword>
<keyword id="KW-0653">Protein transport</keyword>
<keyword id="KW-1278">Translocase</keyword>
<keyword id="KW-0811">Translocation</keyword>
<keyword id="KW-0813">Transport</keyword>
<organism>
    <name type="scientific">Tropheryma whipplei (strain TW08/27)</name>
    <name type="common">Whipple's bacillus</name>
    <dbReference type="NCBI Taxonomy" id="218496"/>
    <lineage>
        <taxon>Bacteria</taxon>
        <taxon>Bacillati</taxon>
        <taxon>Actinomycetota</taxon>
        <taxon>Actinomycetes</taxon>
        <taxon>Micrococcales</taxon>
        <taxon>Tropherymataceae</taxon>
        <taxon>Tropheryma</taxon>
    </lineage>
</organism>
<evidence type="ECO:0000255" key="1">
    <source>
        <dbReference type="HAMAP-Rule" id="MF_01382"/>
    </source>
</evidence>
<evidence type="ECO:0000256" key="2">
    <source>
        <dbReference type="SAM" id="MobiDB-lite"/>
    </source>
</evidence>
<gene>
    <name evidence="1" type="primary">secA</name>
    <name type="ordered locus">TW139</name>
</gene>
<comment type="function">
    <text evidence="1">Part of the Sec protein translocase complex. Interacts with the SecYEG preprotein conducting channel. Has a central role in coupling the hydrolysis of ATP to the transfer of proteins into and across the cell membrane, serving as an ATP-driven molecular motor driving the stepwise translocation of polypeptide chains across the membrane.</text>
</comment>
<comment type="catalytic activity">
    <reaction evidence="1">
        <text>ATP + H2O + cellular proteinSide 1 = ADP + phosphate + cellular proteinSide 2.</text>
        <dbReference type="EC" id="7.4.2.8"/>
    </reaction>
</comment>
<comment type="subunit">
    <text evidence="1">Monomer and homodimer. Part of the essential Sec protein translocation apparatus which comprises SecA, SecYEG and auxiliary proteins SecDF. Other proteins may also be involved.</text>
</comment>
<comment type="subcellular location">
    <subcellularLocation>
        <location evidence="1">Cell membrane</location>
        <topology evidence="1">Peripheral membrane protein</topology>
        <orientation evidence="1">Cytoplasmic side</orientation>
    </subcellularLocation>
    <subcellularLocation>
        <location evidence="1">Cytoplasm</location>
    </subcellularLocation>
    <text evidence="1">Distribution is 50-50.</text>
</comment>
<comment type="similarity">
    <text evidence="1">Belongs to the SecA family.</text>
</comment>
<dbReference type="EC" id="7.4.2.8" evidence="1"/>
<dbReference type="EMBL" id="BX251410">
    <property type="protein sequence ID" value="CAD66819.1"/>
    <property type="molecule type" value="Genomic_DNA"/>
</dbReference>
<dbReference type="RefSeq" id="WP_011096100.1">
    <property type="nucleotide sequence ID" value="NC_004551.1"/>
</dbReference>
<dbReference type="SMR" id="Q83NT4"/>
<dbReference type="GeneID" id="67387911"/>
<dbReference type="KEGG" id="tws:TW139"/>
<dbReference type="HOGENOM" id="CLU_005314_3_0_11"/>
<dbReference type="GO" id="GO:0031522">
    <property type="term" value="C:cell envelope Sec protein transport complex"/>
    <property type="evidence" value="ECO:0007669"/>
    <property type="project" value="TreeGrafter"/>
</dbReference>
<dbReference type="GO" id="GO:0005829">
    <property type="term" value="C:cytosol"/>
    <property type="evidence" value="ECO:0007669"/>
    <property type="project" value="TreeGrafter"/>
</dbReference>
<dbReference type="GO" id="GO:0005886">
    <property type="term" value="C:plasma membrane"/>
    <property type="evidence" value="ECO:0007669"/>
    <property type="project" value="UniProtKB-SubCell"/>
</dbReference>
<dbReference type="GO" id="GO:0005524">
    <property type="term" value="F:ATP binding"/>
    <property type="evidence" value="ECO:0007669"/>
    <property type="project" value="UniProtKB-UniRule"/>
</dbReference>
<dbReference type="GO" id="GO:0008564">
    <property type="term" value="F:protein-exporting ATPase activity"/>
    <property type="evidence" value="ECO:0007669"/>
    <property type="project" value="UniProtKB-EC"/>
</dbReference>
<dbReference type="GO" id="GO:0065002">
    <property type="term" value="P:intracellular protein transmembrane transport"/>
    <property type="evidence" value="ECO:0007669"/>
    <property type="project" value="UniProtKB-UniRule"/>
</dbReference>
<dbReference type="GO" id="GO:0017038">
    <property type="term" value="P:protein import"/>
    <property type="evidence" value="ECO:0007669"/>
    <property type="project" value="InterPro"/>
</dbReference>
<dbReference type="GO" id="GO:0006605">
    <property type="term" value="P:protein targeting"/>
    <property type="evidence" value="ECO:0007669"/>
    <property type="project" value="UniProtKB-UniRule"/>
</dbReference>
<dbReference type="GO" id="GO:0043952">
    <property type="term" value="P:protein transport by the Sec complex"/>
    <property type="evidence" value="ECO:0007669"/>
    <property type="project" value="TreeGrafter"/>
</dbReference>
<dbReference type="CDD" id="cd17928">
    <property type="entry name" value="DEXDc_SecA"/>
    <property type="match status" value="1"/>
</dbReference>
<dbReference type="CDD" id="cd18803">
    <property type="entry name" value="SF2_C_secA"/>
    <property type="match status" value="1"/>
</dbReference>
<dbReference type="FunFam" id="1.10.3060.10:FF:000002">
    <property type="entry name" value="Preprotein translocase subunit SecA"/>
    <property type="match status" value="1"/>
</dbReference>
<dbReference type="FunFam" id="3.40.50.300:FF:000113">
    <property type="entry name" value="Preprotein translocase subunit SecA"/>
    <property type="match status" value="1"/>
</dbReference>
<dbReference type="FunFam" id="3.90.1440.10:FF:000002">
    <property type="entry name" value="Protein translocase subunit SecA"/>
    <property type="match status" value="1"/>
</dbReference>
<dbReference type="Gene3D" id="1.10.3060.10">
    <property type="entry name" value="Helical scaffold and wing domains of SecA"/>
    <property type="match status" value="1"/>
</dbReference>
<dbReference type="Gene3D" id="3.40.50.300">
    <property type="entry name" value="P-loop containing nucleotide triphosphate hydrolases"/>
    <property type="match status" value="2"/>
</dbReference>
<dbReference type="Gene3D" id="3.90.1440.10">
    <property type="entry name" value="SecA, preprotein cross-linking domain"/>
    <property type="match status" value="1"/>
</dbReference>
<dbReference type="HAMAP" id="MF_01382">
    <property type="entry name" value="SecA"/>
    <property type="match status" value="1"/>
</dbReference>
<dbReference type="InterPro" id="IPR014001">
    <property type="entry name" value="Helicase_ATP-bd"/>
</dbReference>
<dbReference type="InterPro" id="IPR027417">
    <property type="entry name" value="P-loop_NTPase"/>
</dbReference>
<dbReference type="InterPro" id="IPR000185">
    <property type="entry name" value="SecA"/>
</dbReference>
<dbReference type="InterPro" id="IPR020937">
    <property type="entry name" value="SecA_CS"/>
</dbReference>
<dbReference type="InterPro" id="IPR011115">
    <property type="entry name" value="SecA_DEAD"/>
</dbReference>
<dbReference type="InterPro" id="IPR014018">
    <property type="entry name" value="SecA_motor_DEAD"/>
</dbReference>
<dbReference type="InterPro" id="IPR011130">
    <property type="entry name" value="SecA_preprotein_X-link_dom"/>
</dbReference>
<dbReference type="InterPro" id="IPR044722">
    <property type="entry name" value="SecA_SF2_C"/>
</dbReference>
<dbReference type="InterPro" id="IPR011116">
    <property type="entry name" value="SecA_Wing/Scaffold"/>
</dbReference>
<dbReference type="InterPro" id="IPR036266">
    <property type="entry name" value="SecA_Wing/Scaffold_sf"/>
</dbReference>
<dbReference type="InterPro" id="IPR036670">
    <property type="entry name" value="SecA_X-link_sf"/>
</dbReference>
<dbReference type="NCBIfam" id="NF009538">
    <property type="entry name" value="PRK12904.1"/>
    <property type="match status" value="1"/>
</dbReference>
<dbReference type="NCBIfam" id="TIGR00963">
    <property type="entry name" value="secA"/>
    <property type="match status" value="1"/>
</dbReference>
<dbReference type="PANTHER" id="PTHR30612:SF0">
    <property type="entry name" value="CHLOROPLAST PROTEIN-TRANSPORTING ATPASE"/>
    <property type="match status" value="1"/>
</dbReference>
<dbReference type="PANTHER" id="PTHR30612">
    <property type="entry name" value="SECA INNER MEMBRANE COMPONENT OF SEC PROTEIN SECRETION SYSTEM"/>
    <property type="match status" value="1"/>
</dbReference>
<dbReference type="Pfam" id="PF21090">
    <property type="entry name" value="P-loop_SecA"/>
    <property type="match status" value="1"/>
</dbReference>
<dbReference type="Pfam" id="PF07517">
    <property type="entry name" value="SecA_DEAD"/>
    <property type="match status" value="1"/>
</dbReference>
<dbReference type="Pfam" id="PF01043">
    <property type="entry name" value="SecA_PP_bind"/>
    <property type="match status" value="1"/>
</dbReference>
<dbReference type="Pfam" id="PF07516">
    <property type="entry name" value="SecA_SW"/>
    <property type="match status" value="1"/>
</dbReference>
<dbReference type="PRINTS" id="PR00906">
    <property type="entry name" value="SECA"/>
</dbReference>
<dbReference type="SMART" id="SM00957">
    <property type="entry name" value="SecA_DEAD"/>
    <property type="match status" value="1"/>
</dbReference>
<dbReference type="SMART" id="SM00958">
    <property type="entry name" value="SecA_PP_bind"/>
    <property type="match status" value="1"/>
</dbReference>
<dbReference type="SUPFAM" id="SSF81886">
    <property type="entry name" value="Helical scaffold and wing domains of SecA"/>
    <property type="match status" value="1"/>
</dbReference>
<dbReference type="SUPFAM" id="SSF52540">
    <property type="entry name" value="P-loop containing nucleoside triphosphate hydrolases"/>
    <property type="match status" value="2"/>
</dbReference>
<dbReference type="SUPFAM" id="SSF81767">
    <property type="entry name" value="Pre-protein crosslinking domain of SecA"/>
    <property type="match status" value="1"/>
</dbReference>
<dbReference type="PROSITE" id="PS01312">
    <property type="entry name" value="SECA"/>
    <property type="match status" value="1"/>
</dbReference>
<dbReference type="PROSITE" id="PS51196">
    <property type="entry name" value="SECA_MOTOR_DEAD"/>
    <property type="match status" value="1"/>
</dbReference>
<name>SECA_TROW8</name>
<accession>Q83NT4</accession>
<feature type="chain" id="PRO_0000318481" description="Protein translocase subunit SecA">
    <location>
        <begin position="1"/>
        <end position="847"/>
    </location>
</feature>
<feature type="region of interest" description="Disordered" evidence="2">
    <location>
        <begin position="828"/>
        <end position="847"/>
    </location>
</feature>
<feature type="compositionally biased region" description="Basic and acidic residues" evidence="2">
    <location>
        <begin position="835"/>
        <end position="847"/>
    </location>
</feature>
<feature type="binding site" evidence="1">
    <location>
        <position position="87"/>
    </location>
    <ligand>
        <name>ATP</name>
        <dbReference type="ChEBI" id="CHEBI:30616"/>
    </ligand>
</feature>
<feature type="binding site" evidence="1">
    <location>
        <begin position="105"/>
        <end position="109"/>
    </location>
    <ligand>
        <name>ATP</name>
        <dbReference type="ChEBI" id="CHEBI:30616"/>
    </ligand>
</feature>
<feature type="binding site" evidence="1">
    <location>
        <position position="495"/>
    </location>
    <ligand>
        <name>ATP</name>
        <dbReference type="ChEBI" id="CHEBI:30616"/>
    </ligand>
</feature>